<evidence type="ECO:0000250" key="1">
    <source>
        <dbReference type="UniProtKB" id="A0A3G1DJF8"/>
    </source>
</evidence>
<evidence type="ECO:0000255" key="2"/>
<evidence type="ECO:0000269" key="3">
    <source>
    </source>
</evidence>
<evidence type="ECO:0000303" key="4">
    <source>
    </source>
</evidence>
<evidence type="ECO:0000305" key="5"/>
<evidence type="ECO:0000305" key="6">
    <source>
    </source>
</evidence>
<reference key="1">
    <citation type="journal article" date="2017" name="Org. Lett.">
        <title>Identification and heterologous production of a benzoyl-primed tricarboxylic acid polyketide intermediate from the zaragozic acid A biosynthetic pathway.</title>
        <authorList>
            <person name="Liu N."/>
            <person name="Hung Y.S."/>
            <person name="Gao S.S."/>
            <person name="Hang L."/>
            <person name="Zou Y."/>
            <person name="Chooi Y.H."/>
            <person name="Tang Y."/>
        </authorList>
    </citation>
    <scope>NUCLEOTIDE SEQUENCE [GENOMIC DNA]</scope>
    <scope>FUNCTION</scope>
    <scope>CATALYTIC ACTIVITY</scope>
    <scope>PATHWAY</scope>
    <source>
        <strain>ATCC 74067</strain>
    </source>
</reference>
<feature type="chain" id="PRO_0000452635" description="Acyl-CoA ligase clz12">
    <location>
        <begin position="1"/>
        <end position="344"/>
    </location>
</feature>
<feature type="region of interest" description="AMP-binding" evidence="2">
    <location>
        <begin position="2"/>
        <end position="239"/>
    </location>
</feature>
<feature type="region of interest" description="AMP-binding" evidence="2">
    <location>
        <begin position="248"/>
        <end position="322"/>
    </location>
</feature>
<gene>
    <name evidence="4" type="primary">clz12</name>
</gene>
<organism>
    <name type="scientific">Cochliobolus lunatus</name>
    <name type="common">Filamentous fungus</name>
    <name type="synonym">Curvularia lunata</name>
    <dbReference type="NCBI Taxonomy" id="5503"/>
    <lineage>
        <taxon>Eukaryota</taxon>
        <taxon>Fungi</taxon>
        <taxon>Dikarya</taxon>
        <taxon>Ascomycota</taxon>
        <taxon>Pezizomycotina</taxon>
        <taxon>Dothideomycetes</taxon>
        <taxon>Pleosporomycetidae</taxon>
        <taxon>Pleosporales</taxon>
        <taxon>Pleosporineae</taxon>
        <taxon>Pleosporaceae</taxon>
        <taxon>Curvularia</taxon>
    </lineage>
</organism>
<keyword id="KW-0067">ATP-binding</keyword>
<keyword id="KW-0436">Ligase</keyword>
<keyword id="KW-0547">Nucleotide-binding</keyword>
<name>CLZ12_COCLU</name>
<comment type="function">
    <text evidence="1 3 6">Acyl-CoA ligase; part of the gene cluster that mediates the biosynthesis of squalestatin S1 (SQS1, also known as zaragozic acid A), a heavily oxidized fungal polyketide that offers potent cholesterol lowering activity by targeting squalene synthase (SS) (PubMed:28605916). SQS1 is composed of a 2,8-dioxobicyclic[3.2.1]octane-3,4,5-tricarboxyclic acid core that is connected to two lipophilic polyketide arms (PubMed:28605916). These initial steps feature the priming of an unusual benzoic acid starter unit onto the highly reducing polyketide synthase clz14, followed by oxaloacetate extension and product release to generate a tricarboxylic acid containing product (PubMed:28605916). The phenylalanine ammonia lyase (PAL) clz10 and the acyl-CoA ligase clz12 are involved in transforming phenylalanine into benzoyl-CoA (PubMed:28605916). The citrate synthase-like protein clz17 is involved in connecting the C-alpha-carbons of the hexaketide chain and oxaloacetate to afford the tricarboxylic acid unit (PubMed:28605916). The potential hydrolytic enzymes, clz11 and clz13, are in close proximity to pks2 and may participate in product release (PubMed:28605916). On the other side, the tetraketide arm is synthesized by a the squalestatin tetraketide synthase clz2 and enzymatically esterified to the core in the last biosynthetic step, by the acetyltransferase clz6 (By similarity). The biosynthesis of the tetraketide must involve 3 rounds of chain extension (By similarity). After the first and second rounds methyl-transfer occurs, and in all rounds of extension the ketoreductase and dehydratase are active (By similarity). The enoyl reductase and C-MeT of clz2 are not active in the final round of extension (By similarity). The acetyltransferase clz6 appears to have a broad substrate selectivity for its acyl CoA substrate, allowing the in vitro synthesis of novel squalestatins (By similarity). The biosynthesis of SQS1 requires several oxidative steps likely performed by oxidoreductases clz3, clz15 and clz16 (Probable). Finally, in support of the identification of the cluster as being responsible for SQS1 production, the cluster contains a gene encoding a putative squalene synthase (SS) clz20, suggesting a likely mechanism for self-resistance (Probable).</text>
</comment>
<comment type="pathway">
    <text evidence="3">Secondary metabolite biosynthesis.</text>
</comment>
<comment type="similarity">
    <text evidence="5">Belongs to the ATP-dependent AMP-binding enzyme family.</text>
</comment>
<dbReference type="EC" id="6.2.1.-" evidence="6"/>
<dbReference type="EMBL" id="MF806531">
    <property type="protein sequence ID" value="AXF50646.1"/>
    <property type="molecule type" value="Genomic_DNA"/>
</dbReference>
<dbReference type="SMR" id="A0A345BJN3"/>
<dbReference type="GO" id="GO:0005524">
    <property type="term" value="F:ATP binding"/>
    <property type="evidence" value="ECO:0007669"/>
    <property type="project" value="UniProtKB-KW"/>
</dbReference>
<dbReference type="GO" id="GO:0016405">
    <property type="term" value="F:CoA-ligase activity"/>
    <property type="evidence" value="ECO:0007669"/>
    <property type="project" value="TreeGrafter"/>
</dbReference>
<dbReference type="GO" id="GO:0019748">
    <property type="term" value="P:secondary metabolic process"/>
    <property type="evidence" value="ECO:0007669"/>
    <property type="project" value="TreeGrafter"/>
</dbReference>
<dbReference type="Gene3D" id="3.30.300.30">
    <property type="match status" value="1"/>
</dbReference>
<dbReference type="Gene3D" id="3.40.50.12780">
    <property type="entry name" value="N-terminal domain of ligase-like"/>
    <property type="match status" value="1"/>
</dbReference>
<dbReference type="InterPro" id="IPR025110">
    <property type="entry name" value="AMP-bd_C"/>
</dbReference>
<dbReference type="InterPro" id="IPR045851">
    <property type="entry name" value="AMP-bd_C_sf"/>
</dbReference>
<dbReference type="InterPro" id="IPR000873">
    <property type="entry name" value="AMP-dep_synth/lig_dom"/>
</dbReference>
<dbReference type="InterPro" id="IPR042099">
    <property type="entry name" value="ANL_N_sf"/>
</dbReference>
<dbReference type="PANTHER" id="PTHR24096:SF317">
    <property type="entry name" value="ADENYLATE-FORMING ENZYME AFEA"/>
    <property type="match status" value="1"/>
</dbReference>
<dbReference type="PANTHER" id="PTHR24096">
    <property type="entry name" value="LONG-CHAIN-FATTY-ACID--COA LIGASE"/>
    <property type="match status" value="1"/>
</dbReference>
<dbReference type="Pfam" id="PF00501">
    <property type="entry name" value="AMP-binding"/>
    <property type="match status" value="1"/>
</dbReference>
<dbReference type="Pfam" id="PF13193">
    <property type="entry name" value="AMP-binding_C"/>
    <property type="match status" value="1"/>
</dbReference>
<dbReference type="SUPFAM" id="SSF56801">
    <property type="entry name" value="Acetyl-CoA synthetase-like"/>
    <property type="match status" value="1"/>
</dbReference>
<protein>
    <recommendedName>
        <fullName evidence="4">Acyl-CoA ligase clz12</fullName>
        <ecNumber evidence="6">6.2.1.-</ecNumber>
    </recommendedName>
    <alternativeName>
        <fullName evidence="4">Squalestatin S1 biosynthesis cluster protein clz12</fullName>
    </alternativeName>
    <alternativeName>
        <fullName evidence="4">Zaragozic acid A biosynthesis cluster protein 12</fullName>
    </alternativeName>
</protein>
<proteinExistence type="evidence at protein level"/>
<sequence>MVQRSHRSLVLETGGIQDRNSAKPFQVRRLYCTPIFHAFSFPEMVVNTIRLGFPSFYMRRFDESFADKIHEFGITETMAAPAMLLKIIQWTEKHEEKRFKLQGLRTILCAGAALASRLRASFLQLFDSASVRIVQVWGMTEGGWFATFWYPEHDDTGSIGRPLPTCQIRVSEVSRAELPDGRQVGELLVKGPQLLTAYKGHPDATKEALHDGWLRTGDIGYCADGKIYIIDRAKDIIKVNGWTISPAELETVLHQIPGIVDAAALSYGTGTKEHVAMFVVAEGPSLLVADIKHHLLQQVARFKVATCEIHLVDSLPRSPSGKVLRSVLRHQLQAHYDNVDSGTS</sequence>
<accession>A0A345BJN3</accession>